<accession>Q9J513</accession>
<protein>
    <recommendedName>
        <fullName>Putative ankyrin repeat protein FPV222</fullName>
    </recommendedName>
</protein>
<reference key="1">
    <citation type="journal article" date="2000" name="J. Virol.">
        <title>The genome of fowlpox virus.</title>
        <authorList>
            <person name="Afonso C.L."/>
            <person name="Tulman E.R."/>
            <person name="Lu Z."/>
            <person name="Zsak L."/>
            <person name="Kutish G.F."/>
            <person name="Rock D.L."/>
        </authorList>
    </citation>
    <scope>NUCLEOTIDE SEQUENCE [LARGE SCALE GENOMIC DNA]</scope>
</reference>
<organismHost>
    <name type="scientific">Vertebrata</name>
    <dbReference type="NCBI Taxonomy" id="7742"/>
</organismHost>
<proteinExistence type="predicted"/>
<keyword id="KW-0040">ANK repeat</keyword>
<keyword id="KW-1185">Reference proteome</keyword>
<keyword id="KW-0677">Repeat</keyword>
<dbReference type="EMBL" id="AF198100">
    <property type="protein sequence ID" value="AAF44566.1"/>
    <property type="molecule type" value="Genomic_DNA"/>
</dbReference>
<dbReference type="RefSeq" id="NP_039185.1">
    <property type="nucleotide sequence ID" value="NC_002188.1"/>
</dbReference>
<dbReference type="SMR" id="Q9J513"/>
<dbReference type="GeneID" id="1486794"/>
<dbReference type="KEGG" id="vg:1486794"/>
<dbReference type="Proteomes" id="UP000008597">
    <property type="component" value="Segment"/>
</dbReference>
<dbReference type="Gene3D" id="1.25.40.20">
    <property type="entry name" value="Ankyrin repeat-containing domain"/>
    <property type="match status" value="4"/>
</dbReference>
<dbReference type="InterPro" id="IPR002110">
    <property type="entry name" value="Ankyrin_rpt"/>
</dbReference>
<dbReference type="InterPro" id="IPR036770">
    <property type="entry name" value="Ankyrin_rpt-contain_sf"/>
</dbReference>
<dbReference type="InterPro" id="IPR018272">
    <property type="entry name" value="PRANC_domain"/>
</dbReference>
<dbReference type="PANTHER" id="PTHR24198">
    <property type="entry name" value="ANKYRIN REPEAT AND PROTEIN KINASE DOMAIN-CONTAINING PROTEIN"/>
    <property type="match status" value="1"/>
</dbReference>
<dbReference type="PANTHER" id="PTHR24198:SF165">
    <property type="entry name" value="ANKYRIN REPEAT-CONTAINING PROTEIN-RELATED"/>
    <property type="match status" value="1"/>
</dbReference>
<dbReference type="Pfam" id="PF12796">
    <property type="entry name" value="Ank_2"/>
    <property type="match status" value="3"/>
</dbReference>
<dbReference type="Pfam" id="PF09372">
    <property type="entry name" value="PRANC"/>
    <property type="match status" value="1"/>
</dbReference>
<dbReference type="PRINTS" id="PR01415">
    <property type="entry name" value="ANKYRIN"/>
</dbReference>
<dbReference type="SMART" id="SM00248">
    <property type="entry name" value="ANK"/>
    <property type="match status" value="15"/>
</dbReference>
<dbReference type="SUPFAM" id="SSF48403">
    <property type="entry name" value="Ankyrin repeat"/>
    <property type="match status" value="3"/>
</dbReference>
<dbReference type="PROSITE" id="PS50297">
    <property type="entry name" value="ANK_REP_REGION"/>
    <property type="match status" value="1"/>
</dbReference>
<dbReference type="PROSITE" id="PS50088">
    <property type="entry name" value="ANK_REPEAT"/>
    <property type="match status" value="7"/>
</dbReference>
<feature type="chain" id="PRO_0000067116" description="Putative ankyrin repeat protein FPV222">
    <location>
        <begin position="1"/>
        <end position="747"/>
    </location>
</feature>
<feature type="repeat" description="ANK 1">
    <location>
        <begin position="38"/>
        <end position="67"/>
    </location>
</feature>
<feature type="repeat" description="ANK 2">
    <location>
        <begin position="103"/>
        <end position="132"/>
    </location>
</feature>
<feature type="repeat" description="ANK 3">
    <location>
        <begin position="136"/>
        <end position="165"/>
    </location>
</feature>
<feature type="repeat" description="ANK 4">
    <location>
        <begin position="169"/>
        <end position="198"/>
    </location>
</feature>
<feature type="repeat" description="ANK 5">
    <location>
        <begin position="202"/>
        <end position="231"/>
    </location>
</feature>
<feature type="repeat" description="ANK 6">
    <location>
        <begin position="234"/>
        <end position="263"/>
    </location>
</feature>
<feature type="repeat" description="ANK 7">
    <location>
        <begin position="294"/>
        <end position="323"/>
    </location>
</feature>
<feature type="repeat" description="ANK 8">
    <location>
        <begin position="328"/>
        <end position="357"/>
    </location>
</feature>
<feature type="repeat" description="ANK 9">
    <location>
        <begin position="361"/>
        <end position="393"/>
    </location>
</feature>
<feature type="repeat" description="ANK 10">
    <location>
        <begin position="397"/>
        <end position="426"/>
    </location>
</feature>
<feature type="repeat" description="ANK 11">
    <location>
        <begin position="430"/>
        <end position="460"/>
    </location>
</feature>
<feature type="repeat" description="ANK 12">
    <location>
        <begin position="464"/>
        <end position="493"/>
    </location>
</feature>
<feature type="repeat" description="ANK 13">
    <location>
        <begin position="495"/>
        <end position="524"/>
    </location>
</feature>
<feature type="repeat" description="ANK 14">
    <location>
        <begin position="529"/>
        <end position="559"/>
    </location>
</feature>
<organism>
    <name type="scientific">Fowlpox virus (strain NVSL)</name>
    <name type="common">FPV</name>
    <dbReference type="NCBI Taxonomy" id="928301"/>
    <lineage>
        <taxon>Viruses</taxon>
        <taxon>Varidnaviria</taxon>
        <taxon>Bamfordvirae</taxon>
        <taxon>Nucleocytoviricota</taxon>
        <taxon>Pokkesviricetes</taxon>
        <taxon>Chitovirales</taxon>
        <taxon>Poxviridae</taxon>
        <taxon>Chordopoxvirinae</taxon>
        <taxon>Avipoxvirus</taxon>
        <taxon>Fowlpox virus</taxon>
    </lineage>
</organism>
<gene>
    <name type="ordered locus">FPV222</name>
</gene>
<sequence length="747" mass="85304">MGISDKVNKLFNFICKNDVVSVRKYLEKGINPNEKNKDNCTMLYTAVEHRYIDIIKLLLDHGADPNIYSSDHMTPLHSVSVIIPIRKISKLITKYGNLVTLANYRNTFFVYNENRNLEIAKMLIQNGALVNMNNMKNITPLHIASSSGSYKMVELLLLHGANTNALTSYGETSLHYSVSSNDLNISELLIENGTNVNVANKDSITALIIAVEIMSIDLVRLLLDKGADTNAIGLERFKLYVTETKQNNNILKYLNTNNVNTNVTMINEYIASELYDWNRNSATSKLMFRSCFEPCTVPVTLATRKGSKELLEILLEYGCNPDICEKTTSTYAMHYAVIRKHYEMLNILIRYDAYTDVKDRQQNTPAHYAVKLPISESCKYLKLLKLAGASFNLTNRKGRTPLHTACKYNNTEAVKYLIESGCDTNIVDVMSFTPLNYAVYYEREDTVKILLESGCVDPNLCDYKEVSPIIQAIKRNNKNIIKMLLNAGIDIKPINECYGLHMLAALHNKDLLKWLLCTISELEVNGVDDHYVPLASYVAELSDIRIMEILIEKGLDLNKVTGPDETMFTMIFSATSDLRKSIIDLLISQIAADEEFSEGFKINKNMIQTDKYLLRVYHECKNQVSKMGEIKLGDGFTMIDIYKNRRSIHVNFLARYAMQLSTIDLREVPIYRKYLEILINPAIKRHKILNAAKDTMNNILHRKEKFYWNLLPVEIKFNILEYLNSKDLISLIHSNTVNEIDLSHIFI</sequence>
<name>V222_FOWPN</name>